<comment type="function">
    <text evidence="1">Produces ATP from ADP in the presence of a proton gradient across the membrane. The catalytic sites are hosted primarily by the beta subunits.</text>
</comment>
<comment type="catalytic activity">
    <reaction evidence="1">
        <text>ATP + H2O + 4 H(+)(in) = ADP + phosphate + 5 H(+)(out)</text>
        <dbReference type="Rhea" id="RHEA:57720"/>
        <dbReference type="ChEBI" id="CHEBI:15377"/>
        <dbReference type="ChEBI" id="CHEBI:15378"/>
        <dbReference type="ChEBI" id="CHEBI:30616"/>
        <dbReference type="ChEBI" id="CHEBI:43474"/>
        <dbReference type="ChEBI" id="CHEBI:456216"/>
        <dbReference type="EC" id="7.1.2.2"/>
    </reaction>
</comment>
<comment type="subunit">
    <text evidence="1">F-type ATPases have 2 components, CF(1) - the catalytic core - and CF(0) - the membrane proton channel. CF(1) has five subunits: alpha(3), beta(3), gamma(1), delta(1), epsilon(1). CF(0) has three main subunits: a(1), b(2) and c(9-12). The alpha and beta chains form an alternating ring which encloses part of the gamma chain. CF(1) is attached to CF(0) by a central stalk formed by the gamma and epsilon chains, while a peripheral stalk is formed by the delta and b chains.</text>
</comment>
<comment type="subcellular location">
    <subcellularLocation>
        <location evidence="1">Cell inner membrane</location>
        <topology evidence="1">Peripheral membrane protein</topology>
    </subcellularLocation>
</comment>
<comment type="similarity">
    <text evidence="1">Belongs to the ATPase alpha/beta chains family.</text>
</comment>
<organism>
    <name type="scientific">Bartonella tribocorum (strain CIP 105476 / IBS 506)</name>
    <dbReference type="NCBI Taxonomy" id="382640"/>
    <lineage>
        <taxon>Bacteria</taxon>
        <taxon>Pseudomonadati</taxon>
        <taxon>Pseudomonadota</taxon>
        <taxon>Alphaproteobacteria</taxon>
        <taxon>Hyphomicrobiales</taxon>
        <taxon>Bartonellaceae</taxon>
        <taxon>Bartonella</taxon>
    </lineage>
</organism>
<feature type="chain" id="PRO_0000339478" description="ATP synthase subunit beta">
    <location>
        <begin position="1"/>
        <end position="541"/>
    </location>
</feature>
<feature type="region of interest" description="Disordered" evidence="2">
    <location>
        <begin position="1"/>
        <end position="65"/>
    </location>
</feature>
<feature type="compositionally biased region" description="Basic and acidic residues" evidence="2">
    <location>
        <begin position="25"/>
        <end position="36"/>
    </location>
</feature>
<feature type="compositionally biased region" description="Basic and acidic residues" evidence="2">
    <location>
        <begin position="52"/>
        <end position="65"/>
    </location>
</feature>
<feature type="binding site" evidence="1">
    <location>
        <begin position="214"/>
        <end position="221"/>
    </location>
    <ligand>
        <name>ATP</name>
        <dbReference type="ChEBI" id="CHEBI:30616"/>
    </ligand>
</feature>
<dbReference type="EC" id="7.1.2.2" evidence="1"/>
<dbReference type="EMBL" id="AM260525">
    <property type="protein sequence ID" value="CAK02442.1"/>
    <property type="molecule type" value="Genomic_DNA"/>
</dbReference>
<dbReference type="RefSeq" id="WP_012232483.1">
    <property type="nucleotide sequence ID" value="NC_010161.1"/>
</dbReference>
<dbReference type="SMR" id="A9IYW6"/>
<dbReference type="KEGG" id="btr:BT_2464"/>
<dbReference type="eggNOG" id="COG0055">
    <property type="taxonomic scope" value="Bacteria"/>
</dbReference>
<dbReference type="HOGENOM" id="CLU_022398_0_2_5"/>
<dbReference type="Proteomes" id="UP000001592">
    <property type="component" value="Chromosome"/>
</dbReference>
<dbReference type="GO" id="GO:0005886">
    <property type="term" value="C:plasma membrane"/>
    <property type="evidence" value="ECO:0007669"/>
    <property type="project" value="UniProtKB-SubCell"/>
</dbReference>
<dbReference type="GO" id="GO:0045259">
    <property type="term" value="C:proton-transporting ATP synthase complex"/>
    <property type="evidence" value="ECO:0007669"/>
    <property type="project" value="UniProtKB-KW"/>
</dbReference>
<dbReference type="GO" id="GO:0005524">
    <property type="term" value="F:ATP binding"/>
    <property type="evidence" value="ECO:0007669"/>
    <property type="project" value="UniProtKB-UniRule"/>
</dbReference>
<dbReference type="GO" id="GO:0016887">
    <property type="term" value="F:ATP hydrolysis activity"/>
    <property type="evidence" value="ECO:0007669"/>
    <property type="project" value="InterPro"/>
</dbReference>
<dbReference type="GO" id="GO:0046933">
    <property type="term" value="F:proton-transporting ATP synthase activity, rotational mechanism"/>
    <property type="evidence" value="ECO:0007669"/>
    <property type="project" value="UniProtKB-UniRule"/>
</dbReference>
<dbReference type="CDD" id="cd18110">
    <property type="entry name" value="ATP-synt_F1_beta_C"/>
    <property type="match status" value="1"/>
</dbReference>
<dbReference type="CDD" id="cd18115">
    <property type="entry name" value="ATP-synt_F1_beta_N"/>
    <property type="match status" value="1"/>
</dbReference>
<dbReference type="CDD" id="cd01133">
    <property type="entry name" value="F1-ATPase_beta_CD"/>
    <property type="match status" value="1"/>
</dbReference>
<dbReference type="FunFam" id="1.10.1140.10:FF:000001">
    <property type="entry name" value="ATP synthase subunit beta"/>
    <property type="match status" value="1"/>
</dbReference>
<dbReference type="FunFam" id="2.40.10.170:FF:000005">
    <property type="entry name" value="ATP synthase subunit beta"/>
    <property type="match status" value="1"/>
</dbReference>
<dbReference type="FunFam" id="3.40.50.300:FF:000026">
    <property type="entry name" value="ATP synthase subunit beta"/>
    <property type="match status" value="1"/>
</dbReference>
<dbReference type="Gene3D" id="2.40.10.170">
    <property type="match status" value="1"/>
</dbReference>
<dbReference type="Gene3D" id="1.10.1140.10">
    <property type="entry name" value="Bovine Mitochondrial F1-atpase, Atp Synthase Beta Chain, Chain D, domain 3"/>
    <property type="match status" value="1"/>
</dbReference>
<dbReference type="Gene3D" id="3.40.50.300">
    <property type="entry name" value="P-loop containing nucleotide triphosphate hydrolases"/>
    <property type="match status" value="1"/>
</dbReference>
<dbReference type="HAMAP" id="MF_01347">
    <property type="entry name" value="ATP_synth_beta_bact"/>
    <property type="match status" value="1"/>
</dbReference>
<dbReference type="InterPro" id="IPR003593">
    <property type="entry name" value="AAA+_ATPase"/>
</dbReference>
<dbReference type="InterPro" id="IPR055190">
    <property type="entry name" value="ATP-synt_VA_C"/>
</dbReference>
<dbReference type="InterPro" id="IPR005722">
    <property type="entry name" value="ATP_synth_F1_bsu"/>
</dbReference>
<dbReference type="InterPro" id="IPR020003">
    <property type="entry name" value="ATPase_a/bsu_AS"/>
</dbReference>
<dbReference type="InterPro" id="IPR050053">
    <property type="entry name" value="ATPase_alpha/beta_chains"/>
</dbReference>
<dbReference type="InterPro" id="IPR004100">
    <property type="entry name" value="ATPase_F1/V1/A1_a/bsu_N"/>
</dbReference>
<dbReference type="InterPro" id="IPR036121">
    <property type="entry name" value="ATPase_F1/V1/A1_a/bsu_N_sf"/>
</dbReference>
<dbReference type="InterPro" id="IPR000194">
    <property type="entry name" value="ATPase_F1/V1/A1_a/bsu_nucl-bd"/>
</dbReference>
<dbReference type="InterPro" id="IPR024034">
    <property type="entry name" value="ATPase_F1/V1_b/a_C"/>
</dbReference>
<dbReference type="InterPro" id="IPR027417">
    <property type="entry name" value="P-loop_NTPase"/>
</dbReference>
<dbReference type="NCBIfam" id="TIGR01039">
    <property type="entry name" value="atpD"/>
    <property type="match status" value="1"/>
</dbReference>
<dbReference type="PANTHER" id="PTHR15184">
    <property type="entry name" value="ATP SYNTHASE"/>
    <property type="match status" value="1"/>
</dbReference>
<dbReference type="PANTHER" id="PTHR15184:SF71">
    <property type="entry name" value="ATP SYNTHASE SUBUNIT BETA, MITOCHONDRIAL"/>
    <property type="match status" value="1"/>
</dbReference>
<dbReference type="Pfam" id="PF00006">
    <property type="entry name" value="ATP-synt_ab"/>
    <property type="match status" value="1"/>
</dbReference>
<dbReference type="Pfam" id="PF02874">
    <property type="entry name" value="ATP-synt_ab_N"/>
    <property type="match status" value="1"/>
</dbReference>
<dbReference type="Pfam" id="PF22919">
    <property type="entry name" value="ATP-synt_VA_C"/>
    <property type="match status" value="1"/>
</dbReference>
<dbReference type="PIRSF" id="PIRSF039072">
    <property type="entry name" value="ATPase_subunit_beta"/>
    <property type="match status" value="1"/>
</dbReference>
<dbReference type="SMART" id="SM00382">
    <property type="entry name" value="AAA"/>
    <property type="match status" value="1"/>
</dbReference>
<dbReference type="SUPFAM" id="SSF47917">
    <property type="entry name" value="C-terminal domain of alpha and beta subunits of F1 ATP synthase"/>
    <property type="match status" value="1"/>
</dbReference>
<dbReference type="SUPFAM" id="SSF50615">
    <property type="entry name" value="N-terminal domain of alpha and beta subunits of F1 ATP synthase"/>
    <property type="match status" value="1"/>
</dbReference>
<dbReference type="SUPFAM" id="SSF52540">
    <property type="entry name" value="P-loop containing nucleoside triphosphate hydrolases"/>
    <property type="match status" value="1"/>
</dbReference>
<dbReference type="PROSITE" id="PS00152">
    <property type="entry name" value="ATPASE_ALPHA_BETA"/>
    <property type="match status" value="1"/>
</dbReference>
<gene>
    <name evidence="1" type="primary">atpD</name>
    <name type="ordered locus">BT_2464</name>
</gene>
<keyword id="KW-0066">ATP synthesis</keyword>
<keyword id="KW-0067">ATP-binding</keyword>
<keyword id="KW-0997">Cell inner membrane</keyword>
<keyword id="KW-1003">Cell membrane</keyword>
<keyword id="KW-0139">CF(1)</keyword>
<keyword id="KW-0375">Hydrogen ion transport</keyword>
<keyword id="KW-0406">Ion transport</keyword>
<keyword id="KW-0472">Membrane</keyword>
<keyword id="KW-0547">Nucleotide-binding</keyword>
<keyword id="KW-1278">Translocase</keyword>
<keyword id="KW-0813">Transport</keyword>
<protein>
    <recommendedName>
        <fullName evidence="1">ATP synthase subunit beta</fullName>
        <ecNumber evidence="1">7.1.2.2</ecNumber>
    </recommendedName>
    <alternativeName>
        <fullName evidence="1">ATP synthase F1 sector subunit beta</fullName>
    </alternativeName>
    <alternativeName>
        <fullName evidence="1">F-ATPase subunit beta</fullName>
    </alternativeName>
</protein>
<accession>A9IYW6</accession>
<name>ATPB_BART1</name>
<evidence type="ECO:0000255" key="1">
    <source>
        <dbReference type="HAMAP-Rule" id="MF_01347"/>
    </source>
</evidence>
<evidence type="ECO:0000256" key="2">
    <source>
        <dbReference type="SAM" id="MobiDB-lite"/>
    </source>
</evidence>
<sequence length="541" mass="57578">MAKAVTSSKGAEKSEKKKPAARSGVKKDASKSKDASKSQVNVKISSAPARSAAKDTPVKKEERAKGTVGEIKQVIGAVVDVQFEGALPNILNALETENLGNRLVLEVAQHLGENTVRTIAMDTTDGLMRGQKVVDTGAQISVPVGEATLGRIMNVIGEPVDNVGPIASTKTRSIHQEAPEYVEQSTVSEILVTGIKVVDLLAPYSKGGKIGLFGGAGVGKTVLIMELINNIAKAHGGYSVFAGVGERTREGNDLYYEMIESGVNVNPKENNGSTEGSKCALVYGQMNEPPGARARVALSGLTIAESFRDEGQDVLFFVDNIFRFTQAGAEVSALLGRIPSAVGYQPTLATDMGALQERITSTKIGSITSVQAIYVPADDLTDPAPATSFAHLDATTVLSRSIAEKGIYPAVDPLDSFSRMLDPLIVGEEHYTVACQVQTILQRYRALQDIIAILGMDELSEDDKLLVGRARKIERFLSQPFHVAEAFTGSPGKLVSLEDTIKGFKGLCAGDYDDLPEAAFYMVGSIDEALEKGKRLMAEAS</sequence>
<reference key="1">
    <citation type="journal article" date="2007" name="Nat. Genet.">
        <title>Genomic analysis of Bartonella identifies type IV secretion systems as host adaptability factors.</title>
        <authorList>
            <person name="Saenz H.L."/>
            <person name="Engel P."/>
            <person name="Stoeckli M.C."/>
            <person name="Lanz C."/>
            <person name="Raddatz G."/>
            <person name="Vayssier-Taussat M."/>
            <person name="Birtles R."/>
            <person name="Schuster S.C."/>
            <person name="Dehio C."/>
        </authorList>
    </citation>
    <scope>NUCLEOTIDE SEQUENCE [LARGE SCALE GENOMIC DNA]</scope>
    <source>
        <strain>CIP 105476 / IBS 506</strain>
    </source>
</reference>
<proteinExistence type="inferred from homology"/>